<comment type="function">
    <text evidence="1">Functions as a component of the Arp2/3 complex which is involved in regulation of actin polymerization and together with an activating nucleation-promoting factor (NPF) mediates the formation of branched actin networks.</text>
</comment>
<comment type="subunit">
    <text evidence="1">Component of the Arp2/3 complex.</text>
</comment>
<comment type="subcellular location">
    <subcellularLocation>
        <location evidence="1">Cytoplasm</location>
        <location evidence="1">Cytoskeleton</location>
    </subcellularLocation>
</comment>
<comment type="similarity">
    <text evidence="2">Belongs to the ARPC3 family.</text>
</comment>
<keyword id="KW-0009">Actin-binding</keyword>
<keyword id="KW-0963">Cytoplasm</keyword>
<keyword id="KW-0206">Cytoskeleton</keyword>
<keyword id="KW-1185">Reference proteome</keyword>
<proteinExistence type="evidence at transcript level"/>
<accession>O15604</accession>
<accession>A0A175JL11</accession>
<accession>C4LZL6</accession>
<gene>
    <name evidence="4" type="ORF">EHI_174910</name>
</gene>
<sequence length="188" mass="21779">MTTIAKQDKIFMKRSGAYHSELDKDIVQKAGNFPLMQFKTKVKVNPKFLLKGDDMDIVDEAITYYKANVFYKNFDMSICEADKLLVYLIFYIQSLLLKFNGRTKVECDKMAYSLAIENFALPGDGKFCLGGIVEPLKASEKEVVRQYMTAIRNETGLRLTQAVFKNDPTKCDKWWMCFNKRKFLNKTI</sequence>
<evidence type="ECO:0000255" key="1">
    <source>
        <dbReference type="PIRNR" id="PIRNR016315"/>
    </source>
</evidence>
<evidence type="ECO:0000305" key="2"/>
<evidence type="ECO:0000312" key="3">
    <source>
        <dbReference type="EMBL" id="BAA21999.1"/>
    </source>
</evidence>
<evidence type="ECO:0000312" key="4">
    <source>
        <dbReference type="EMBL" id="EAL47955.1"/>
    </source>
</evidence>
<reference evidence="4" key="1">
    <citation type="journal article" date="2005" name="Nature">
        <title>The genome of the protist parasite Entamoeba histolytica.</title>
        <authorList>
            <person name="Loftus B.J."/>
            <person name="Anderson I."/>
            <person name="Davies R."/>
            <person name="Alsmark U.C."/>
            <person name="Samuelson J."/>
            <person name="Amedeo P."/>
            <person name="Roncaglia P."/>
            <person name="Berriman M."/>
            <person name="Hirt R.P."/>
            <person name="Mann B.J."/>
            <person name="Nozaki T."/>
            <person name="Suh B."/>
            <person name="Pop M."/>
            <person name="Duchene M."/>
            <person name="Ackers J."/>
            <person name="Tannich E."/>
            <person name="Leippe M."/>
            <person name="Hofer M."/>
            <person name="Bruchhaus I."/>
            <person name="Willhoeft U."/>
            <person name="Bhattacharya A."/>
            <person name="Chillingworth T."/>
            <person name="Churcher C.M."/>
            <person name="Hance Z."/>
            <person name="Harris B."/>
            <person name="Harris D."/>
            <person name="Jagels K."/>
            <person name="Moule S."/>
            <person name="Mungall K.L."/>
            <person name="Ormond D."/>
            <person name="Squares R."/>
            <person name="Whitehead S."/>
            <person name="Quail M.A."/>
            <person name="Rabbinowitsch E."/>
            <person name="Norbertczak H."/>
            <person name="Price C."/>
            <person name="Wang Z."/>
            <person name="Guillen N."/>
            <person name="Gilchrist C."/>
            <person name="Stroup S.E."/>
            <person name="Bhattacharya S."/>
            <person name="Lohia A."/>
            <person name="Foster P.G."/>
            <person name="Sicheritz-Ponten T."/>
            <person name="Weber C."/>
            <person name="Singh U."/>
            <person name="Mukherjee C."/>
            <person name="El-Sayed N.M.A."/>
            <person name="Petri W.A."/>
            <person name="Clark C.G."/>
            <person name="Embley T.M."/>
            <person name="Barrell B.G."/>
            <person name="Fraser C.M."/>
            <person name="Hall N."/>
        </authorList>
    </citation>
    <scope>NUCLEOTIDE SEQUENCE [LARGE SCALE GENOMIC DNA]</scope>
    <source>
        <strain evidence="4">ATCC 30459 / HM-1:IMSS / ABRM</strain>
    </source>
</reference>
<reference evidence="3" key="2">
    <citation type="journal article" date="1997" name="Biochem. Biophys. Res. Commun.">
        <title>Analysis of expressed sequence tags (ESTs) of the parasitic protozoa Entamoeba histolytica.</title>
        <authorList>
            <person name="Tanaka T."/>
            <person name="Tanaka M."/>
            <person name="Mitsui Y."/>
        </authorList>
    </citation>
    <scope>NUCLEOTIDE SEQUENCE [MRNA] OF 10-135</scope>
    <source>
        <strain evidence="3">ATCC 30459 / HM-1:IMSS / ABRM</strain>
    </source>
</reference>
<protein>
    <recommendedName>
        <fullName evidence="1">Actin-related protein 2/3 complex subunit 3</fullName>
    </recommendedName>
    <alternativeName>
        <fullName>Arp2/3 complex 21 kDa subunit</fullName>
        <shortName>p21-ARC</shortName>
    </alternativeName>
</protein>
<organism evidence="4">
    <name type="scientific">Entamoeba histolytica (strain ATCC 30459 / HM-1:IMSS / ABRM)</name>
    <dbReference type="NCBI Taxonomy" id="294381"/>
    <lineage>
        <taxon>Eukaryota</taxon>
        <taxon>Amoebozoa</taxon>
        <taxon>Evosea</taxon>
        <taxon>Archamoebae</taxon>
        <taxon>Mastigamoebida</taxon>
        <taxon>Entamoebidae</taxon>
        <taxon>Entamoeba</taxon>
    </lineage>
</organism>
<feature type="chain" id="PRO_0000124046" description="Actin-related protein 2/3 complex subunit 3">
    <location>
        <begin position="1"/>
        <end position="188"/>
    </location>
</feature>
<feature type="sequence conflict" description="In Ref. 2; BAA21999." evidence="2" ref="2">
    <original>F</original>
    <variation>L</variation>
    <location>
        <position position="74"/>
    </location>
</feature>
<feature type="sequence conflict" description="In Ref. 2; BAA21999." evidence="2" ref="2">
    <original>VYLIFYI</original>
    <variation>AYLMFYL</variation>
    <location>
        <begin position="86"/>
        <end position="92"/>
    </location>
</feature>
<feature type="sequence conflict" description="In Ref. 2; BAA21999." evidence="2" ref="2">
    <original>KFN</original>
    <variation>TFT</variation>
    <location>
        <begin position="98"/>
        <end position="100"/>
    </location>
</feature>
<feature type="sequence conflict" description="In Ref. 2; BAA21999." evidence="2" ref="2">
    <original>E</original>
    <variation>D</variation>
    <location>
        <position position="106"/>
    </location>
</feature>
<feature type="sequence conflict" description="In Ref. 2; BAA21999." evidence="2" ref="2">
    <original>Y</original>
    <variation>F</variation>
    <location>
        <position position="112"/>
    </location>
</feature>
<feature type="sequence conflict" description="In Ref. 2; BAA21999." evidence="2" ref="2">
    <original>A</original>
    <variation>G</variation>
    <location>
        <position position="120"/>
    </location>
</feature>
<dbReference type="EMBL" id="DS571189">
    <property type="protein sequence ID" value="EAL47955.1"/>
    <property type="molecule type" value="Genomic_DNA"/>
</dbReference>
<dbReference type="EMBL" id="AB002759">
    <property type="protein sequence ID" value="BAA21999.1"/>
    <property type="molecule type" value="mRNA"/>
</dbReference>
<dbReference type="RefSeq" id="XP_653342.1">
    <property type="nucleotide sequence ID" value="XM_648250.2"/>
</dbReference>
<dbReference type="SMR" id="O15604"/>
<dbReference type="STRING" id="5759.C4LZL6"/>
<dbReference type="EnsemblProtists" id="GAT94317">
    <property type="protein sequence ID" value="GAT94317"/>
    <property type="gene ID" value="CL6EHI_174910"/>
</dbReference>
<dbReference type="EnsemblProtists" id="rna_EHI_174910-1">
    <property type="protein sequence ID" value="rna_EHI_174910-1"/>
    <property type="gene ID" value="EHI_174910"/>
</dbReference>
<dbReference type="GeneID" id="3407660"/>
<dbReference type="KEGG" id="ehi:EHI_174910"/>
<dbReference type="VEuPathDB" id="AmoebaDB:EHI5A_075410"/>
<dbReference type="VEuPathDB" id="AmoebaDB:EHI_174910"/>
<dbReference type="VEuPathDB" id="AmoebaDB:KM1_236740"/>
<dbReference type="eggNOG" id="KOG3155">
    <property type="taxonomic scope" value="Eukaryota"/>
</dbReference>
<dbReference type="HOGENOM" id="CLU_094365_1_0_1"/>
<dbReference type="OMA" id="TPSKWWL"/>
<dbReference type="OrthoDB" id="200404at2759"/>
<dbReference type="Proteomes" id="UP000001926">
    <property type="component" value="Partially assembled WGS sequence"/>
</dbReference>
<dbReference type="GO" id="GO:0005885">
    <property type="term" value="C:Arp2/3 protein complex"/>
    <property type="evidence" value="ECO:0000318"/>
    <property type="project" value="GO_Central"/>
</dbReference>
<dbReference type="GO" id="GO:0005737">
    <property type="term" value="C:cytoplasm"/>
    <property type="evidence" value="ECO:0007669"/>
    <property type="project" value="UniProtKB-KW"/>
</dbReference>
<dbReference type="GO" id="GO:0003779">
    <property type="term" value="F:actin binding"/>
    <property type="evidence" value="ECO:0007669"/>
    <property type="project" value="UniProtKB-KW"/>
</dbReference>
<dbReference type="GO" id="GO:0034314">
    <property type="term" value="P:Arp2/3 complex-mediated actin nucleation"/>
    <property type="evidence" value="ECO:0000318"/>
    <property type="project" value="GO_Central"/>
</dbReference>
<dbReference type="GO" id="GO:0030833">
    <property type="term" value="P:regulation of actin filament polymerization"/>
    <property type="evidence" value="ECO:0007669"/>
    <property type="project" value="InterPro"/>
</dbReference>
<dbReference type="FunFam" id="1.10.1760.10:FF:000003">
    <property type="entry name" value="Actin-related protein 2/3 complex subunit 3"/>
    <property type="match status" value="1"/>
</dbReference>
<dbReference type="Gene3D" id="1.10.1760.10">
    <property type="entry name" value="Actin-related protein 2/3 complex subunit 3"/>
    <property type="match status" value="1"/>
</dbReference>
<dbReference type="InterPro" id="IPR007204">
    <property type="entry name" value="ARPC3"/>
</dbReference>
<dbReference type="InterPro" id="IPR036753">
    <property type="entry name" value="ARPC3_sf"/>
</dbReference>
<dbReference type="PANTHER" id="PTHR12391">
    <property type="entry name" value="ARP2/3 COMPLEX 21 KD SUBUNIT"/>
    <property type="match status" value="1"/>
</dbReference>
<dbReference type="Pfam" id="PF04062">
    <property type="entry name" value="P21-Arc"/>
    <property type="match status" value="1"/>
</dbReference>
<dbReference type="PIRSF" id="PIRSF016315">
    <property type="entry name" value="ARP2/3_P21-Arc"/>
    <property type="match status" value="1"/>
</dbReference>
<dbReference type="SUPFAM" id="SSF69060">
    <property type="entry name" value="Arp2/3 complex 21 kDa subunit ARPC3"/>
    <property type="match status" value="1"/>
</dbReference>
<name>ARPC3_ENTH1</name>